<name>RS9_CROS5</name>
<gene>
    <name evidence="1" type="primary">rpsI</name>
    <name evidence="1" type="synonym">rps9</name>
    <name type="ordered locus">cce_4043</name>
</gene>
<proteinExistence type="inferred from homology"/>
<protein>
    <recommendedName>
        <fullName evidence="1">Small ribosomal subunit protein uS9</fullName>
    </recommendedName>
    <alternativeName>
        <fullName evidence="3">30S ribosomal protein S9</fullName>
    </alternativeName>
</protein>
<organism>
    <name type="scientific">Crocosphaera subtropica (strain ATCC 51142 / BH68)</name>
    <name type="common">Cyanothece sp. (strain ATCC 51142)</name>
    <dbReference type="NCBI Taxonomy" id="43989"/>
    <lineage>
        <taxon>Bacteria</taxon>
        <taxon>Bacillati</taxon>
        <taxon>Cyanobacteriota</taxon>
        <taxon>Cyanophyceae</taxon>
        <taxon>Oscillatoriophycideae</taxon>
        <taxon>Chroococcales</taxon>
        <taxon>Aphanothecaceae</taxon>
        <taxon>Crocosphaera</taxon>
        <taxon>Crocosphaera subtropica</taxon>
    </lineage>
</organism>
<feature type="chain" id="PRO_1000146446" description="Small ribosomal subunit protein uS9">
    <location>
        <begin position="1"/>
        <end position="137"/>
    </location>
</feature>
<feature type="region of interest" description="Disordered" evidence="2">
    <location>
        <begin position="103"/>
        <end position="137"/>
    </location>
</feature>
<feature type="compositionally biased region" description="Basic residues" evidence="2">
    <location>
        <begin position="118"/>
        <end position="137"/>
    </location>
</feature>
<dbReference type="EMBL" id="CP000806">
    <property type="protein sequence ID" value="ACB53391.1"/>
    <property type="molecule type" value="Genomic_DNA"/>
</dbReference>
<dbReference type="RefSeq" id="WP_009543871.1">
    <property type="nucleotide sequence ID" value="NC_010546.1"/>
</dbReference>
<dbReference type="SMR" id="B1WQT9"/>
<dbReference type="STRING" id="43989.cce_4043"/>
<dbReference type="KEGG" id="cyt:cce_4043"/>
<dbReference type="eggNOG" id="COG0103">
    <property type="taxonomic scope" value="Bacteria"/>
</dbReference>
<dbReference type="HOGENOM" id="CLU_046483_2_1_3"/>
<dbReference type="OrthoDB" id="9803965at2"/>
<dbReference type="Proteomes" id="UP000001203">
    <property type="component" value="Chromosome circular"/>
</dbReference>
<dbReference type="GO" id="GO:0022627">
    <property type="term" value="C:cytosolic small ribosomal subunit"/>
    <property type="evidence" value="ECO:0007669"/>
    <property type="project" value="TreeGrafter"/>
</dbReference>
<dbReference type="GO" id="GO:0003723">
    <property type="term" value="F:RNA binding"/>
    <property type="evidence" value="ECO:0007669"/>
    <property type="project" value="TreeGrafter"/>
</dbReference>
<dbReference type="GO" id="GO:0003735">
    <property type="term" value="F:structural constituent of ribosome"/>
    <property type="evidence" value="ECO:0007669"/>
    <property type="project" value="InterPro"/>
</dbReference>
<dbReference type="GO" id="GO:0006412">
    <property type="term" value="P:translation"/>
    <property type="evidence" value="ECO:0007669"/>
    <property type="project" value="UniProtKB-UniRule"/>
</dbReference>
<dbReference type="FunFam" id="3.30.230.10:FF:000001">
    <property type="entry name" value="30S ribosomal protein S9"/>
    <property type="match status" value="1"/>
</dbReference>
<dbReference type="Gene3D" id="3.30.230.10">
    <property type="match status" value="1"/>
</dbReference>
<dbReference type="HAMAP" id="MF_00532_B">
    <property type="entry name" value="Ribosomal_uS9_B"/>
    <property type="match status" value="1"/>
</dbReference>
<dbReference type="InterPro" id="IPR020568">
    <property type="entry name" value="Ribosomal_Su5_D2-typ_SF"/>
</dbReference>
<dbReference type="InterPro" id="IPR000754">
    <property type="entry name" value="Ribosomal_uS9"/>
</dbReference>
<dbReference type="InterPro" id="IPR023035">
    <property type="entry name" value="Ribosomal_uS9_bac/plastid"/>
</dbReference>
<dbReference type="InterPro" id="IPR020574">
    <property type="entry name" value="Ribosomal_uS9_CS"/>
</dbReference>
<dbReference type="InterPro" id="IPR014721">
    <property type="entry name" value="Ribsml_uS5_D2-typ_fold_subgr"/>
</dbReference>
<dbReference type="NCBIfam" id="NF001099">
    <property type="entry name" value="PRK00132.1"/>
    <property type="match status" value="1"/>
</dbReference>
<dbReference type="PANTHER" id="PTHR21569">
    <property type="entry name" value="RIBOSOMAL PROTEIN S9"/>
    <property type="match status" value="1"/>
</dbReference>
<dbReference type="PANTHER" id="PTHR21569:SF1">
    <property type="entry name" value="SMALL RIBOSOMAL SUBUNIT PROTEIN US9M"/>
    <property type="match status" value="1"/>
</dbReference>
<dbReference type="Pfam" id="PF00380">
    <property type="entry name" value="Ribosomal_S9"/>
    <property type="match status" value="1"/>
</dbReference>
<dbReference type="SUPFAM" id="SSF54211">
    <property type="entry name" value="Ribosomal protein S5 domain 2-like"/>
    <property type="match status" value="1"/>
</dbReference>
<dbReference type="PROSITE" id="PS00360">
    <property type="entry name" value="RIBOSOMAL_S9"/>
    <property type="match status" value="1"/>
</dbReference>
<keyword id="KW-1185">Reference proteome</keyword>
<keyword id="KW-0687">Ribonucleoprotein</keyword>
<keyword id="KW-0689">Ribosomal protein</keyword>
<accession>B1WQT9</accession>
<sequence>MQATENKEKVVYWGTGRRKSAVARVRLVPGSGEIIVNKKPGNIYFNRIPDYLQAIKGPLETLGLENDYDILVNAHGGGLTGQADAVKLGVARALCELAPENRPPLKAEGYLTRDPRAKERKKYGLHKARKAPQYSKR</sequence>
<evidence type="ECO:0000255" key="1">
    <source>
        <dbReference type="HAMAP-Rule" id="MF_00532"/>
    </source>
</evidence>
<evidence type="ECO:0000256" key="2">
    <source>
        <dbReference type="SAM" id="MobiDB-lite"/>
    </source>
</evidence>
<evidence type="ECO:0000305" key="3"/>
<comment type="similarity">
    <text evidence="1">Belongs to the universal ribosomal protein uS9 family.</text>
</comment>
<reference key="1">
    <citation type="journal article" date="2008" name="Proc. Natl. Acad. Sci. U.S.A.">
        <title>The genome of Cyanothece 51142, a unicellular diazotrophic cyanobacterium important in the marine nitrogen cycle.</title>
        <authorList>
            <person name="Welsh E.A."/>
            <person name="Liberton M."/>
            <person name="Stoeckel J."/>
            <person name="Loh T."/>
            <person name="Elvitigala T."/>
            <person name="Wang C."/>
            <person name="Wollam A."/>
            <person name="Fulton R.S."/>
            <person name="Clifton S.W."/>
            <person name="Jacobs J.M."/>
            <person name="Aurora R."/>
            <person name="Ghosh B.K."/>
            <person name="Sherman L.A."/>
            <person name="Smith R.D."/>
            <person name="Wilson R.K."/>
            <person name="Pakrasi H.B."/>
        </authorList>
    </citation>
    <scope>NUCLEOTIDE SEQUENCE [LARGE SCALE GENOMIC DNA]</scope>
    <source>
        <strain>ATCC 51142 / BH68</strain>
    </source>
</reference>